<name>FLUC_THEON</name>
<protein>
    <recommendedName>
        <fullName evidence="1">Fluoride-specific ion channel FluC</fullName>
    </recommendedName>
</protein>
<keyword id="KW-1003">Cell membrane</keyword>
<keyword id="KW-0407">Ion channel</keyword>
<keyword id="KW-0406">Ion transport</keyword>
<keyword id="KW-0472">Membrane</keyword>
<keyword id="KW-0479">Metal-binding</keyword>
<keyword id="KW-0915">Sodium</keyword>
<keyword id="KW-0812">Transmembrane</keyword>
<keyword id="KW-1133">Transmembrane helix</keyword>
<keyword id="KW-0813">Transport</keyword>
<gene>
    <name evidence="1" type="primary">fluC</name>
    <name evidence="1" type="synonym">crcB</name>
    <name type="ordered locus">TON_0795</name>
</gene>
<accession>B6YVW0</accession>
<feature type="chain" id="PRO_1000125164" description="Fluoride-specific ion channel FluC">
    <location>
        <begin position="1"/>
        <end position="123"/>
    </location>
</feature>
<feature type="transmembrane region" description="Helical" evidence="1">
    <location>
        <begin position="7"/>
        <end position="27"/>
    </location>
</feature>
<feature type="transmembrane region" description="Helical" evidence="1">
    <location>
        <begin position="39"/>
        <end position="59"/>
    </location>
</feature>
<feature type="transmembrane region" description="Helical" evidence="1">
    <location>
        <begin position="68"/>
        <end position="88"/>
    </location>
</feature>
<feature type="transmembrane region" description="Helical" evidence="1">
    <location>
        <begin position="100"/>
        <end position="120"/>
    </location>
</feature>
<feature type="binding site" evidence="1">
    <location>
        <position position="75"/>
    </location>
    <ligand>
        <name>Na(+)</name>
        <dbReference type="ChEBI" id="CHEBI:29101"/>
        <note>structural</note>
    </ligand>
</feature>
<feature type="binding site" evidence="1">
    <location>
        <position position="78"/>
    </location>
    <ligand>
        <name>Na(+)</name>
        <dbReference type="ChEBI" id="CHEBI:29101"/>
        <note>structural</note>
    </ligand>
</feature>
<sequence length="123" mass="13421">MNGRIAVAIALGGALGALARFYISGILPVYKDFPVGTLLVNSIASFILGYIYGLLFWGIDVPADWRAFFGTGFCGALSTFSTFSYETFSLLREREYFLAALNISANVIITVSLVFIGFILARR</sequence>
<comment type="function">
    <text evidence="1">Fluoride-specific ion channel. Important for reducing fluoride concentration in the cell, thus reducing its toxicity.</text>
</comment>
<comment type="catalytic activity">
    <reaction evidence="1">
        <text>fluoride(in) = fluoride(out)</text>
        <dbReference type="Rhea" id="RHEA:76159"/>
        <dbReference type="ChEBI" id="CHEBI:17051"/>
    </reaction>
    <physiologicalReaction direction="left-to-right" evidence="1">
        <dbReference type="Rhea" id="RHEA:76160"/>
    </physiologicalReaction>
</comment>
<comment type="activity regulation">
    <text evidence="1">Na(+) is not transported, but it plays an essential structural role and its presence is essential for fluoride channel function.</text>
</comment>
<comment type="subcellular location">
    <subcellularLocation>
        <location evidence="1">Cell membrane</location>
        <topology evidence="1">Multi-pass membrane protein</topology>
    </subcellularLocation>
</comment>
<comment type="similarity">
    <text evidence="1">Belongs to the fluoride channel Fluc/FEX (TC 1.A.43) family.</text>
</comment>
<proteinExistence type="inferred from homology"/>
<evidence type="ECO:0000255" key="1">
    <source>
        <dbReference type="HAMAP-Rule" id="MF_00454"/>
    </source>
</evidence>
<reference key="1">
    <citation type="journal article" date="2008" name="J. Bacteriol.">
        <title>The complete genome sequence of Thermococcus onnurineus NA1 reveals a mixed heterotrophic and carboxydotrophic metabolism.</title>
        <authorList>
            <person name="Lee H.S."/>
            <person name="Kang S.G."/>
            <person name="Bae S.S."/>
            <person name="Lim J.K."/>
            <person name="Cho Y."/>
            <person name="Kim Y.J."/>
            <person name="Jeon J.H."/>
            <person name="Cha S.-S."/>
            <person name="Kwon K.K."/>
            <person name="Kim H.-T."/>
            <person name="Park C.-J."/>
            <person name="Lee H.-W."/>
            <person name="Kim S.I."/>
            <person name="Chun J."/>
            <person name="Colwell R.R."/>
            <person name="Kim S.-J."/>
            <person name="Lee J.-H."/>
        </authorList>
    </citation>
    <scope>NUCLEOTIDE SEQUENCE [LARGE SCALE GENOMIC DNA]</scope>
    <source>
        <strain>NA1</strain>
    </source>
</reference>
<dbReference type="EMBL" id="CP000855">
    <property type="protein sequence ID" value="ACJ16283.1"/>
    <property type="molecule type" value="Genomic_DNA"/>
</dbReference>
<dbReference type="RefSeq" id="WP_012571755.1">
    <property type="nucleotide sequence ID" value="NC_011529.1"/>
</dbReference>
<dbReference type="SMR" id="B6YVW0"/>
<dbReference type="STRING" id="523850.TON_0795"/>
<dbReference type="GeneID" id="7017098"/>
<dbReference type="KEGG" id="ton:TON_0795"/>
<dbReference type="PATRIC" id="fig|523850.10.peg.802"/>
<dbReference type="eggNOG" id="arCOG04701">
    <property type="taxonomic scope" value="Archaea"/>
</dbReference>
<dbReference type="HOGENOM" id="CLU_114342_3_0_2"/>
<dbReference type="OrthoDB" id="253428at2157"/>
<dbReference type="Proteomes" id="UP000002727">
    <property type="component" value="Chromosome"/>
</dbReference>
<dbReference type="GO" id="GO:0005886">
    <property type="term" value="C:plasma membrane"/>
    <property type="evidence" value="ECO:0007669"/>
    <property type="project" value="UniProtKB-SubCell"/>
</dbReference>
<dbReference type="GO" id="GO:0062054">
    <property type="term" value="F:fluoride channel activity"/>
    <property type="evidence" value="ECO:0007669"/>
    <property type="project" value="UniProtKB-UniRule"/>
</dbReference>
<dbReference type="GO" id="GO:0046872">
    <property type="term" value="F:metal ion binding"/>
    <property type="evidence" value="ECO:0007669"/>
    <property type="project" value="UniProtKB-KW"/>
</dbReference>
<dbReference type="GO" id="GO:0140114">
    <property type="term" value="P:cellular detoxification of fluoride"/>
    <property type="evidence" value="ECO:0007669"/>
    <property type="project" value="UniProtKB-UniRule"/>
</dbReference>
<dbReference type="HAMAP" id="MF_00454">
    <property type="entry name" value="FluC"/>
    <property type="match status" value="1"/>
</dbReference>
<dbReference type="InterPro" id="IPR003691">
    <property type="entry name" value="FluC"/>
</dbReference>
<dbReference type="NCBIfam" id="TIGR00494">
    <property type="entry name" value="crcB"/>
    <property type="match status" value="1"/>
</dbReference>
<dbReference type="PANTHER" id="PTHR28259">
    <property type="entry name" value="FLUORIDE EXPORT PROTEIN 1-RELATED"/>
    <property type="match status" value="1"/>
</dbReference>
<dbReference type="PANTHER" id="PTHR28259:SF1">
    <property type="entry name" value="FLUORIDE EXPORT PROTEIN 1-RELATED"/>
    <property type="match status" value="1"/>
</dbReference>
<dbReference type="Pfam" id="PF02537">
    <property type="entry name" value="CRCB"/>
    <property type="match status" value="1"/>
</dbReference>
<organism>
    <name type="scientific">Thermococcus onnurineus (strain NA1)</name>
    <dbReference type="NCBI Taxonomy" id="523850"/>
    <lineage>
        <taxon>Archaea</taxon>
        <taxon>Methanobacteriati</taxon>
        <taxon>Methanobacteriota</taxon>
        <taxon>Thermococci</taxon>
        <taxon>Thermococcales</taxon>
        <taxon>Thermococcaceae</taxon>
        <taxon>Thermococcus</taxon>
    </lineage>
</organism>